<organism>
    <name type="scientific">Salmonella choleraesuis (strain SC-B67)</name>
    <dbReference type="NCBI Taxonomy" id="321314"/>
    <lineage>
        <taxon>Bacteria</taxon>
        <taxon>Pseudomonadati</taxon>
        <taxon>Pseudomonadota</taxon>
        <taxon>Gammaproteobacteria</taxon>
        <taxon>Enterobacterales</taxon>
        <taxon>Enterobacteriaceae</taxon>
        <taxon>Salmonella</taxon>
    </lineage>
</organism>
<name>LEU3_SALCH</name>
<sequence>MSKNYHIAVLPGDGIGPEVMAQALKVMDAVRSRFDMRITTSHYDVGGIAIDNHGHPLPKATVEGCEQADAILFGSVGGPKWENLPPESQPERGALLPLRKHFKLFSNLRPAKLYQGLEAFCPLRADIAANGFDILCVRELTGGIYFGQPKGREGSGQYEKAFDTEVYHRFEIERIARIAFESARKRRRKVTSIDKANVLQSSILWREIVNDVAKTYPDVELAHMYIDNATMQLIKDPSQFDVLLCSNLFGDILSDECAMITGSMGMLPSASLNEQGFGLYEPAGGSAPDIAGKNIANPIAQILSLALLLRYSLDANDAATAIEQAINRALEEGVRTGDLARGAAAVSTDEMGDIIARYVAEGV</sequence>
<accession>Q57TE7</accession>
<keyword id="KW-0028">Amino-acid biosynthesis</keyword>
<keyword id="KW-0100">Branched-chain amino acid biosynthesis</keyword>
<keyword id="KW-0963">Cytoplasm</keyword>
<keyword id="KW-0432">Leucine biosynthesis</keyword>
<keyword id="KW-0460">Magnesium</keyword>
<keyword id="KW-0464">Manganese</keyword>
<keyword id="KW-0479">Metal-binding</keyword>
<keyword id="KW-0520">NAD</keyword>
<keyword id="KW-0560">Oxidoreductase</keyword>
<reference key="1">
    <citation type="journal article" date="2005" name="Nucleic Acids Res.">
        <title>The genome sequence of Salmonella enterica serovar Choleraesuis, a highly invasive and resistant zoonotic pathogen.</title>
        <authorList>
            <person name="Chiu C.-H."/>
            <person name="Tang P."/>
            <person name="Chu C."/>
            <person name="Hu S."/>
            <person name="Bao Q."/>
            <person name="Yu J."/>
            <person name="Chou Y.-Y."/>
            <person name="Wang H.-S."/>
            <person name="Lee Y.-S."/>
        </authorList>
    </citation>
    <scope>NUCLEOTIDE SEQUENCE [LARGE SCALE GENOMIC DNA]</scope>
    <source>
        <strain>SC-B67</strain>
    </source>
</reference>
<protein>
    <recommendedName>
        <fullName evidence="1">3-isopropylmalate dehydrogenase</fullName>
        <ecNumber evidence="1">1.1.1.85</ecNumber>
    </recommendedName>
    <alternativeName>
        <fullName evidence="1">3-IPM-DH</fullName>
    </alternativeName>
    <alternativeName>
        <fullName evidence="1">Beta-IPM dehydrogenase</fullName>
        <shortName evidence="1">IMDH</shortName>
    </alternativeName>
</protein>
<comment type="function">
    <text evidence="1">Catalyzes the oxidation of 3-carboxy-2-hydroxy-4-methylpentanoate (3-isopropylmalate) to 3-carboxy-4-methyl-2-oxopentanoate. The product decarboxylates to 4-methyl-2 oxopentanoate.</text>
</comment>
<comment type="catalytic activity">
    <reaction evidence="1">
        <text>(2R,3S)-3-isopropylmalate + NAD(+) = 4-methyl-2-oxopentanoate + CO2 + NADH</text>
        <dbReference type="Rhea" id="RHEA:32271"/>
        <dbReference type="ChEBI" id="CHEBI:16526"/>
        <dbReference type="ChEBI" id="CHEBI:17865"/>
        <dbReference type="ChEBI" id="CHEBI:35121"/>
        <dbReference type="ChEBI" id="CHEBI:57540"/>
        <dbReference type="ChEBI" id="CHEBI:57945"/>
        <dbReference type="EC" id="1.1.1.85"/>
    </reaction>
</comment>
<comment type="cofactor">
    <cofactor evidence="1">
        <name>Mg(2+)</name>
        <dbReference type="ChEBI" id="CHEBI:18420"/>
    </cofactor>
    <cofactor evidence="1">
        <name>Mn(2+)</name>
        <dbReference type="ChEBI" id="CHEBI:29035"/>
    </cofactor>
    <text evidence="1">Binds 1 Mg(2+) or Mn(2+) ion per subunit.</text>
</comment>
<comment type="pathway">
    <text evidence="1">Amino-acid biosynthesis; L-leucine biosynthesis; L-leucine from 3-methyl-2-oxobutanoate: step 3/4.</text>
</comment>
<comment type="subunit">
    <text evidence="1">Homodimer.</text>
</comment>
<comment type="subcellular location">
    <subcellularLocation>
        <location evidence="1">Cytoplasm</location>
    </subcellularLocation>
</comment>
<comment type="similarity">
    <text evidence="1">Belongs to the isocitrate and isopropylmalate dehydrogenases family. LeuB type 1 subfamily.</text>
</comment>
<proteinExistence type="inferred from homology"/>
<dbReference type="EC" id="1.1.1.85" evidence="1"/>
<dbReference type="EMBL" id="AE017220">
    <property type="protein sequence ID" value="AAX64014.1"/>
    <property type="molecule type" value="Genomic_DNA"/>
</dbReference>
<dbReference type="RefSeq" id="WP_000042325.1">
    <property type="nucleotide sequence ID" value="NC_006905.1"/>
</dbReference>
<dbReference type="SMR" id="Q57TE7"/>
<dbReference type="KEGG" id="sec:SCH_0108"/>
<dbReference type="HOGENOM" id="CLU_031953_0_3_6"/>
<dbReference type="UniPathway" id="UPA00048">
    <property type="reaction ID" value="UER00072"/>
</dbReference>
<dbReference type="Proteomes" id="UP000000538">
    <property type="component" value="Chromosome"/>
</dbReference>
<dbReference type="GO" id="GO:0005829">
    <property type="term" value="C:cytosol"/>
    <property type="evidence" value="ECO:0007669"/>
    <property type="project" value="TreeGrafter"/>
</dbReference>
<dbReference type="GO" id="GO:0003862">
    <property type="term" value="F:3-isopropylmalate dehydrogenase activity"/>
    <property type="evidence" value="ECO:0007669"/>
    <property type="project" value="UniProtKB-UniRule"/>
</dbReference>
<dbReference type="GO" id="GO:0000287">
    <property type="term" value="F:magnesium ion binding"/>
    <property type="evidence" value="ECO:0007669"/>
    <property type="project" value="InterPro"/>
</dbReference>
<dbReference type="GO" id="GO:0051287">
    <property type="term" value="F:NAD binding"/>
    <property type="evidence" value="ECO:0007669"/>
    <property type="project" value="InterPro"/>
</dbReference>
<dbReference type="GO" id="GO:0009098">
    <property type="term" value="P:L-leucine biosynthetic process"/>
    <property type="evidence" value="ECO:0007669"/>
    <property type="project" value="UniProtKB-UniRule"/>
</dbReference>
<dbReference type="FunFam" id="3.40.718.10:FF:000004">
    <property type="entry name" value="3-isopropylmalate dehydrogenase"/>
    <property type="match status" value="1"/>
</dbReference>
<dbReference type="Gene3D" id="3.40.718.10">
    <property type="entry name" value="Isopropylmalate Dehydrogenase"/>
    <property type="match status" value="1"/>
</dbReference>
<dbReference type="HAMAP" id="MF_01033">
    <property type="entry name" value="LeuB_type1"/>
    <property type="match status" value="1"/>
</dbReference>
<dbReference type="InterPro" id="IPR019818">
    <property type="entry name" value="IsoCit/isopropylmalate_DH_CS"/>
</dbReference>
<dbReference type="InterPro" id="IPR024084">
    <property type="entry name" value="IsoPropMal-DH-like_dom"/>
</dbReference>
<dbReference type="InterPro" id="IPR004429">
    <property type="entry name" value="Isopropylmalate_DH"/>
</dbReference>
<dbReference type="NCBIfam" id="TIGR00169">
    <property type="entry name" value="leuB"/>
    <property type="match status" value="1"/>
</dbReference>
<dbReference type="PANTHER" id="PTHR42979">
    <property type="entry name" value="3-ISOPROPYLMALATE DEHYDROGENASE"/>
    <property type="match status" value="1"/>
</dbReference>
<dbReference type="PANTHER" id="PTHR42979:SF1">
    <property type="entry name" value="3-ISOPROPYLMALATE DEHYDROGENASE"/>
    <property type="match status" value="1"/>
</dbReference>
<dbReference type="Pfam" id="PF00180">
    <property type="entry name" value="Iso_dh"/>
    <property type="match status" value="1"/>
</dbReference>
<dbReference type="SMART" id="SM01329">
    <property type="entry name" value="Iso_dh"/>
    <property type="match status" value="1"/>
</dbReference>
<dbReference type="SUPFAM" id="SSF53659">
    <property type="entry name" value="Isocitrate/Isopropylmalate dehydrogenase-like"/>
    <property type="match status" value="1"/>
</dbReference>
<dbReference type="PROSITE" id="PS00470">
    <property type="entry name" value="IDH_IMDH"/>
    <property type="match status" value="1"/>
</dbReference>
<gene>
    <name evidence="1" type="primary">leuB</name>
    <name type="ordered locus">SCH_0108</name>
</gene>
<evidence type="ECO:0000255" key="1">
    <source>
        <dbReference type="HAMAP-Rule" id="MF_01033"/>
    </source>
</evidence>
<feature type="chain" id="PRO_0000083740" description="3-isopropylmalate dehydrogenase">
    <location>
        <begin position="1"/>
        <end position="363"/>
    </location>
</feature>
<feature type="binding site" evidence="1">
    <location>
        <begin position="78"/>
        <end position="91"/>
    </location>
    <ligand>
        <name>NAD(+)</name>
        <dbReference type="ChEBI" id="CHEBI:57540"/>
    </ligand>
</feature>
<feature type="binding site" evidence="1">
    <location>
        <position position="99"/>
    </location>
    <ligand>
        <name>substrate</name>
    </ligand>
</feature>
<feature type="binding site" evidence="1">
    <location>
        <position position="109"/>
    </location>
    <ligand>
        <name>substrate</name>
    </ligand>
</feature>
<feature type="binding site" evidence="1">
    <location>
        <position position="138"/>
    </location>
    <ligand>
        <name>substrate</name>
    </ligand>
</feature>
<feature type="binding site" evidence="1">
    <location>
        <position position="227"/>
    </location>
    <ligand>
        <name>Mg(2+)</name>
        <dbReference type="ChEBI" id="CHEBI:18420"/>
    </ligand>
</feature>
<feature type="binding site" evidence="1">
    <location>
        <position position="227"/>
    </location>
    <ligand>
        <name>substrate</name>
    </ligand>
</feature>
<feature type="binding site" evidence="1">
    <location>
        <position position="251"/>
    </location>
    <ligand>
        <name>Mg(2+)</name>
        <dbReference type="ChEBI" id="CHEBI:18420"/>
    </ligand>
</feature>
<feature type="binding site" evidence="1">
    <location>
        <position position="255"/>
    </location>
    <ligand>
        <name>Mg(2+)</name>
        <dbReference type="ChEBI" id="CHEBI:18420"/>
    </ligand>
</feature>
<feature type="binding site" evidence="1">
    <location>
        <begin position="285"/>
        <end position="297"/>
    </location>
    <ligand>
        <name>NAD(+)</name>
        <dbReference type="ChEBI" id="CHEBI:57540"/>
    </ligand>
</feature>
<feature type="site" description="Important for catalysis" evidence="1">
    <location>
        <position position="145"/>
    </location>
</feature>
<feature type="site" description="Important for catalysis" evidence="1">
    <location>
        <position position="195"/>
    </location>
</feature>